<feature type="chain" id="PRO_0000387427" description="tRNA1(Val) (adenine(37)-N6)-methyltransferase">
    <location>
        <begin position="1"/>
        <end position="244"/>
    </location>
</feature>
<accession>A8FRM9</accession>
<keyword id="KW-0963">Cytoplasm</keyword>
<keyword id="KW-0489">Methyltransferase</keyword>
<keyword id="KW-1185">Reference proteome</keyword>
<keyword id="KW-0949">S-adenosyl-L-methionine</keyword>
<keyword id="KW-0808">Transferase</keyword>
<keyword id="KW-0819">tRNA processing</keyword>
<sequence length="244" mass="26786">MAFTFKQFHIDDFGCGMPVSTDAVILGAWAPLSDAQNILDIGAGSGLLSLMATQRSNAKVTSIELDDTAVNACQKNFEASPWTSRLTVKHSSVQEFSKQHQESEESLFDHIICNPPYFKGGTQSQNRLRAQARHTDTLDFCALLEAIGSLLAPNGTASLILPSQSMSEFGLVLADSSLEFSQVTDISDSQRKTPHRHLFTLCHKSTDASAKPNEGATEHFCIKELDGSYTEEMKLLITGFYLKY</sequence>
<dbReference type="EC" id="2.1.1.223" evidence="1"/>
<dbReference type="EMBL" id="CP000821">
    <property type="protein sequence ID" value="ABV35502.1"/>
    <property type="molecule type" value="Genomic_DNA"/>
</dbReference>
<dbReference type="RefSeq" id="WP_012141238.1">
    <property type="nucleotide sequence ID" value="NC_009831.1"/>
</dbReference>
<dbReference type="SMR" id="A8FRM9"/>
<dbReference type="STRING" id="425104.Ssed_0891"/>
<dbReference type="KEGG" id="sse:Ssed_0891"/>
<dbReference type="eggNOG" id="COG4123">
    <property type="taxonomic scope" value="Bacteria"/>
</dbReference>
<dbReference type="HOGENOM" id="CLU_061983_0_0_6"/>
<dbReference type="OrthoDB" id="5383291at2"/>
<dbReference type="Proteomes" id="UP000002015">
    <property type="component" value="Chromosome"/>
</dbReference>
<dbReference type="GO" id="GO:0005737">
    <property type="term" value="C:cytoplasm"/>
    <property type="evidence" value="ECO:0007669"/>
    <property type="project" value="UniProtKB-SubCell"/>
</dbReference>
<dbReference type="GO" id="GO:0003676">
    <property type="term" value="F:nucleic acid binding"/>
    <property type="evidence" value="ECO:0007669"/>
    <property type="project" value="InterPro"/>
</dbReference>
<dbReference type="GO" id="GO:0000179">
    <property type="term" value="F:rRNA (adenine-N6,N6-)-dimethyltransferase activity"/>
    <property type="evidence" value="ECO:0007669"/>
    <property type="project" value="InterPro"/>
</dbReference>
<dbReference type="GO" id="GO:0016430">
    <property type="term" value="F:tRNA (adenine-N6)-methyltransferase activity"/>
    <property type="evidence" value="ECO:0007669"/>
    <property type="project" value="UniProtKB-UniRule"/>
</dbReference>
<dbReference type="GO" id="GO:0008033">
    <property type="term" value="P:tRNA processing"/>
    <property type="evidence" value="ECO:0007669"/>
    <property type="project" value="UniProtKB-UniRule"/>
</dbReference>
<dbReference type="CDD" id="cd02440">
    <property type="entry name" value="AdoMet_MTases"/>
    <property type="match status" value="1"/>
</dbReference>
<dbReference type="Gene3D" id="3.40.50.150">
    <property type="entry name" value="Vaccinia Virus protein VP39"/>
    <property type="match status" value="1"/>
</dbReference>
<dbReference type="HAMAP" id="MF_01872">
    <property type="entry name" value="tRNA_methyltr_YfiC"/>
    <property type="match status" value="1"/>
</dbReference>
<dbReference type="InterPro" id="IPR002052">
    <property type="entry name" value="DNA_methylase_N6_adenine_CS"/>
</dbReference>
<dbReference type="InterPro" id="IPR020596">
    <property type="entry name" value="rRNA_Ade_Mease_Trfase_CS"/>
</dbReference>
<dbReference type="InterPro" id="IPR029063">
    <property type="entry name" value="SAM-dependent_MTases_sf"/>
</dbReference>
<dbReference type="InterPro" id="IPR007848">
    <property type="entry name" value="Small_mtfrase_dom"/>
</dbReference>
<dbReference type="InterPro" id="IPR050210">
    <property type="entry name" value="tRNA_Adenine-N(6)_MTase"/>
</dbReference>
<dbReference type="InterPro" id="IPR022882">
    <property type="entry name" value="tRNA_adenine-N6_MeTrfase"/>
</dbReference>
<dbReference type="PANTHER" id="PTHR47739">
    <property type="entry name" value="TRNA1(VAL) (ADENINE(37)-N6)-METHYLTRANSFERASE"/>
    <property type="match status" value="1"/>
</dbReference>
<dbReference type="PANTHER" id="PTHR47739:SF1">
    <property type="entry name" value="TRNA1(VAL) (ADENINE(37)-N6)-METHYLTRANSFERASE"/>
    <property type="match status" value="1"/>
</dbReference>
<dbReference type="Pfam" id="PF05175">
    <property type="entry name" value="MTS"/>
    <property type="match status" value="1"/>
</dbReference>
<dbReference type="PRINTS" id="PR00507">
    <property type="entry name" value="N12N6MTFRASE"/>
</dbReference>
<dbReference type="SUPFAM" id="SSF53335">
    <property type="entry name" value="S-adenosyl-L-methionine-dependent methyltransferases"/>
    <property type="match status" value="1"/>
</dbReference>
<dbReference type="PROSITE" id="PS00092">
    <property type="entry name" value="N6_MTASE"/>
    <property type="match status" value="1"/>
</dbReference>
<proteinExistence type="inferred from homology"/>
<reference key="1">
    <citation type="submission" date="2007-08" db="EMBL/GenBank/DDBJ databases">
        <title>Complete sequence of Shewanella sediminis HAW-EB3.</title>
        <authorList>
            <consortium name="US DOE Joint Genome Institute"/>
            <person name="Copeland A."/>
            <person name="Lucas S."/>
            <person name="Lapidus A."/>
            <person name="Barry K."/>
            <person name="Glavina del Rio T."/>
            <person name="Dalin E."/>
            <person name="Tice H."/>
            <person name="Pitluck S."/>
            <person name="Chertkov O."/>
            <person name="Brettin T."/>
            <person name="Bruce D."/>
            <person name="Detter J.C."/>
            <person name="Han C."/>
            <person name="Schmutz J."/>
            <person name="Larimer F."/>
            <person name="Land M."/>
            <person name="Hauser L."/>
            <person name="Kyrpides N."/>
            <person name="Kim E."/>
            <person name="Zhao J.-S."/>
            <person name="Richardson P."/>
        </authorList>
    </citation>
    <scope>NUCLEOTIDE SEQUENCE [LARGE SCALE GENOMIC DNA]</scope>
    <source>
        <strain>HAW-EB3</strain>
    </source>
</reference>
<comment type="function">
    <text evidence="1">Specifically methylates the adenine in position 37 of tRNA(1)(Val) (anticodon cmo5UAC).</text>
</comment>
<comment type="catalytic activity">
    <reaction evidence="1">
        <text>adenosine(37) in tRNA1(Val) + S-adenosyl-L-methionine = N(6)-methyladenosine(37) in tRNA1(Val) + S-adenosyl-L-homocysteine + H(+)</text>
        <dbReference type="Rhea" id="RHEA:43160"/>
        <dbReference type="Rhea" id="RHEA-COMP:10369"/>
        <dbReference type="Rhea" id="RHEA-COMP:10370"/>
        <dbReference type="ChEBI" id="CHEBI:15378"/>
        <dbReference type="ChEBI" id="CHEBI:57856"/>
        <dbReference type="ChEBI" id="CHEBI:59789"/>
        <dbReference type="ChEBI" id="CHEBI:74411"/>
        <dbReference type="ChEBI" id="CHEBI:74449"/>
        <dbReference type="EC" id="2.1.1.223"/>
    </reaction>
</comment>
<comment type="subcellular location">
    <subcellularLocation>
        <location evidence="1">Cytoplasm</location>
    </subcellularLocation>
</comment>
<comment type="similarity">
    <text evidence="1">Belongs to the methyltransferase superfamily. tRNA (adenine-N(6)-)-methyltransferase family.</text>
</comment>
<organism>
    <name type="scientific">Shewanella sediminis (strain HAW-EB3)</name>
    <dbReference type="NCBI Taxonomy" id="425104"/>
    <lineage>
        <taxon>Bacteria</taxon>
        <taxon>Pseudomonadati</taxon>
        <taxon>Pseudomonadota</taxon>
        <taxon>Gammaproteobacteria</taxon>
        <taxon>Alteromonadales</taxon>
        <taxon>Shewanellaceae</taxon>
        <taxon>Shewanella</taxon>
    </lineage>
</organism>
<evidence type="ECO:0000255" key="1">
    <source>
        <dbReference type="HAMAP-Rule" id="MF_01872"/>
    </source>
</evidence>
<protein>
    <recommendedName>
        <fullName evidence="1">tRNA1(Val) (adenine(37)-N6)-methyltransferase</fullName>
        <ecNumber evidence="1">2.1.1.223</ecNumber>
    </recommendedName>
    <alternativeName>
        <fullName evidence="1">tRNA m6A37 methyltransferase</fullName>
    </alternativeName>
</protein>
<gene>
    <name type="ordered locus">Ssed_0891</name>
</gene>
<name>TRMN6_SHESH</name>